<feature type="signal peptide" evidence="2">
    <location>
        <begin position="1"/>
        <end position="18"/>
    </location>
</feature>
<feature type="propeptide" id="PRO_0000461982" evidence="1">
    <location>
        <begin position="19"/>
        <end position="59"/>
    </location>
</feature>
<feature type="peptide" id="PRO_5004480731" description="Arminin 7519" evidence="1">
    <location>
        <begin position="60"/>
        <end position="86"/>
    </location>
</feature>
<feature type="modified residue" description="Alanine amide" evidence="1">
    <location>
        <position position="86"/>
    </location>
</feature>
<dbReference type="EMBL" id="KC701507">
    <property type="protein sequence ID" value="AGN53414.1"/>
    <property type="molecule type" value="mRNA"/>
</dbReference>
<dbReference type="RefSeq" id="XP_065643180.1">
    <property type="nucleotide sequence ID" value="XM_065787108.1"/>
</dbReference>
<dbReference type="GeneID" id="124810178"/>
<dbReference type="Proteomes" id="UP000694840">
    <property type="component" value="Unplaced"/>
</dbReference>
<dbReference type="GO" id="GO:0005576">
    <property type="term" value="C:extracellular region"/>
    <property type="evidence" value="ECO:0007669"/>
    <property type="project" value="UniProtKB-SubCell"/>
</dbReference>
<keyword id="KW-0027">Amidation</keyword>
<keyword id="KW-0044">Antibiotic</keyword>
<keyword id="KW-0929">Antimicrobial</keyword>
<keyword id="KW-0391">Immunity</keyword>
<keyword id="KW-0399">Innate immunity</keyword>
<keyword id="KW-0472">Membrane</keyword>
<keyword id="KW-1185">Reference proteome</keyword>
<keyword id="KW-0964">Secreted</keyword>
<keyword id="KW-0732">Signal</keyword>
<keyword id="KW-1052">Target cell membrane</keyword>
<keyword id="KW-1053">Target membrane</keyword>
<sequence>MRSTFAVLFLALIALTYSKNYQDVKEEIKNEVENEILRDLGEDDDELDDNAQEAVNDARPLRRFFRKFRGRKILPYMPSLINIWKAGKK</sequence>
<accession>R9UE65</accession>
<comment type="function">
    <text evidence="1">Antimicrobial peptide with a broad-spectrum antimicrobial activity. Keeps its antibacterial activity under a wide range of salt concentrations that mimic physiological conditions of human blood, which is surprising, since Hydra is an obligate freshwater animal with nearly no salt tolerance. Does not affect red blood cells.</text>
</comment>
<comment type="subcellular location">
    <subcellularLocation>
        <location evidence="1">Secreted</location>
    </subcellularLocation>
    <subcellularLocation>
        <location evidence="1">Target cell membrane</location>
    </subcellularLocation>
</comment>
<comment type="tissue specificity">
    <text evidence="3">Expressed in entodermal epithelium along the body column.</text>
</comment>
<comment type="similarity">
    <text evidence="5">Belongs to the arminin family.</text>
</comment>
<evidence type="ECO:0000250" key="1">
    <source>
        <dbReference type="UniProtKB" id="D2XUU4"/>
    </source>
</evidence>
<evidence type="ECO:0000255" key="2"/>
<evidence type="ECO:0000269" key="3">
    <source>
    </source>
</evidence>
<evidence type="ECO:0000303" key="4">
    <source>
    </source>
</evidence>
<evidence type="ECO:0000305" key="5"/>
<evidence type="ECO:0000312" key="6">
    <source>
        <dbReference type="EMBL" id="AGN53414.1"/>
    </source>
</evidence>
<protein>
    <recommendedName>
        <fullName evidence="4">Arminin 7519</fullName>
    </recommendedName>
</protein>
<proteinExistence type="evidence at transcript level"/>
<reference evidence="6" key="1">
    <citation type="journal article" date="2013" name="Proc. Natl. Acad. Sci. U.S.A.">
        <title>Distinct antimicrobial peptide expression determines host species-specific bacterial associations.</title>
        <authorList>
            <person name="Franzenburg S."/>
            <person name="Walter J."/>
            <person name="Kunzel S."/>
            <person name="Wang J."/>
            <person name="Baines J.F."/>
            <person name="Bosch T.C."/>
            <person name="Fraune S."/>
        </authorList>
    </citation>
    <scope>NUCLEOTIDE SEQUENCE [MRNA]</scope>
    <scope>TISSUE SPECIFICITY</scope>
    <source>
        <strain>AEP</strain>
    </source>
</reference>
<name>ARM19_HYDVU</name>
<organism>
    <name type="scientific">Hydra vulgaris</name>
    <name type="common">Hydra</name>
    <name type="synonym">Hydra attenuata</name>
    <dbReference type="NCBI Taxonomy" id="6087"/>
    <lineage>
        <taxon>Eukaryota</taxon>
        <taxon>Metazoa</taxon>
        <taxon>Cnidaria</taxon>
        <taxon>Hydrozoa</taxon>
        <taxon>Hydroidolina</taxon>
        <taxon>Anthoathecata</taxon>
        <taxon>Aplanulata</taxon>
        <taxon>Hydridae</taxon>
        <taxon>Hydra</taxon>
    </lineage>
</organism>